<gene>
    <name evidence="1" type="primary">rplW</name>
    <name type="ordered locus">BH10490</name>
</gene>
<reference key="1">
    <citation type="journal article" date="2004" name="Proc. Natl. Acad. Sci. U.S.A.">
        <title>The louse-borne human pathogen Bartonella quintana is a genomic derivative of the zoonotic agent Bartonella henselae.</title>
        <authorList>
            <person name="Alsmark U.C.M."/>
            <person name="Frank A.C."/>
            <person name="Karlberg E.O."/>
            <person name="Legault B.-A."/>
            <person name="Ardell D.H."/>
            <person name="Canbaeck B."/>
            <person name="Eriksson A.-S."/>
            <person name="Naeslund A.K."/>
            <person name="Handley S.A."/>
            <person name="Huvet M."/>
            <person name="La Scola B."/>
            <person name="Holmberg M."/>
            <person name="Andersson S.G.E."/>
        </authorList>
    </citation>
    <scope>NUCLEOTIDE SEQUENCE [LARGE SCALE GENOMIC DNA]</scope>
    <source>
        <strain>ATCC 49882 / DSM 28221 / CCUG 30454 / Houston 1</strain>
    </source>
</reference>
<organism>
    <name type="scientific">Bartonella henselae (strain ATCC 49882 / DSM 28221 / CCUG 30454 / Houston 1)</name>
    <name type="common">Rochalimaea henselae</name>
    <dbReference type="NCBI Taxonomy" id="283166"/>
    <lineage>
        <taxon>Bacteria</taxon>
        <taxon>Pseudomonadati</taxon>
        <taxon>Pseudomonadota</taxon>
        <taxon>Alphaproteobacteria</taxon>
        <taxon>Hyphomicrobiales</taxon>
        <taxon>Bartonellaceae</taxon>
        <taxon>Bartonella</taxon>
    </lineage>
</organism>
<comment type="function">
    <text evidence="1">One of the early assembly proteins it binds 23S rRNA. One of the proteins that surrounds the polypeptide exit tunnel on the outside of the ribosome. Forms the main docking site for trigger factor binding to the ribosome.</text>
</comment>
<comment type="subunit">
    <text evidence="1">Part of the 50S ribosomal subunit. Contacts protein L29, and trigger factor when it is bound to the ribosome.</text>
</comment>
<comment type="similarity">
    <text evidence="1">Belongs to the universal ribosomal protein uL23 family.</text>
</comment>
<sequence>MKNLRHYDVIVSPIITEKSTMISEYNQVAFNVAPKATKPEIKAAVEALFSVKVKAVNTIVRKGKVKRFKGIVGRQNDVKKAIVTLASGQSIDVSTGL</sequence>
<evidence type="ECO:0000255" key="1">
    <source>
        <dbReference type="HAMAP-Rule" id="MF_01369"/>
    </source>
</evidence>
<evidence type="ECO:0000305" key="2"/>
<keyword id="KW-0687">Ribonucleoprotein</keyword>
<keyword id="KW-0689">Ribosomal protein</keyword>
<keyword id="KW-0694">RNA-binding</keyword>
<keyword id="KW-0699">rRNA-binding</keyword>
<name>RL23_BARHE</name>
<proteinExistence type="inferred from homology"/>
<accession>Q6G2W7</accession>
<dbReference type="EMBL" id="BX897699">
    <property type="protein sequence ID" value="CAF27840.1"/>
    <property type="molecule type" value="Genomic_DNA"/>
</dbReference>
<dbReference type="RefSeq" id="WP_011180912.1">
    <property type="nucleotide sequence ID" value="NZ_LRIJ02000001.1"/>
</dbReference>
<dbReference type="SMR" id="Q6G2W7"/>
<dbReference type="PaxDb" id="283166-BH10490"/>
<dbReference type="EnsemblBacteria" id="CAF27840">
    <property type="protein sequence ID" value="CAF27840"/>
    <property type="gene ID" value="BH10490"/>
</dbReference>
<dbReference type="KEGG" id="bhe:BH10490"/>
<dbReference type="eggNOG" id="COG0089">
    <property type="taxonomic scope" value="Bacteria"/>
</dbReference>
<dbReference type="OrthoDB" id="9793353at2"/>
<dbReference type="Proteomes" id="UP000000421">
    <property type="component" value="Chromosome"/>
</dbReference>
<dbReference type="GO" id="GO:1990904">
    <property type="term" value="C:ribonucleoprotein complex"/>
    <property type="evidence" value="ECO:0007669"/>
    <property type="project" value="UniProtKB-KW"/>
</dbReference>
<dbReference type="GO" id="GO:0005840">
    <property type="term" value="C:ribosome"/>
    <property type="evidence" value="ECO:0007669"/>
    <property type="project" value="UniProtKB-KW"/>
</dbReference>
<dbReference type="GO" id="GO:0019843">
    <property type="term" value="F:rRNA binding"/>
    <property type="evidence" value="ECO:0007669"/>
    <property type="project" value="UniProtKB-UniRule"/>
</dbReference>
<dbReference type="GO" id="GO:0003735">
    <property type="term" value="F:structural constituent of ribosome"/>
    <property type="evidence" value="ECO:0007669"/>
    <property type="project" value="InterPro"/>
</dbReference>
<dbReference type="GO" id="GO:0006412">
    <property type="term" value="P:translation"/>
    <property type="evidence" value="ECO:0007669"/>
    <property type="project" value="UniProtKB-UniRule"/>
</dbReference>
<dbReference type="FunFam" id="3.30.70.330:FF:000001">
    <property type="entry name" value="50S ribosomal protein L23"/>
    <property type="match status" value="1"/>
</dbReference>
<dbReference type="Gene3D" id="3.30.70.330">
    <property type="match status" value="1"/>
</dbReference>
<dbReference type="HAMAP" id="MF_01369_B">
    <property type="entry name" value="Ribosomal_uL23_B"/>
    <property type="match status" value="1"/>
</dbReference>
<dbReference type="InterPro" id="IPR012677">
    <property type="entry name" value="Nucleotide-bd_a/b_plait_sf"/>
</dbReference>
<dbReference type="InterPro" id="IPR013025">
    <property type="entry name" value="Ribosomal_uL23-like"/>
</dbReference>
<dbReference type="InterPro" id="IPR012678">
    <property type="entry name" value="Ribosomal_uL23/eL15/eS24_sf"/>
</dbReference>
<dbReference type="NCBIfam" id="NF004359">
    <property type="entry name" value="PRK05738.1-3"/>
    <property type="match status" value="1"/>
</dbReference>
<dbReference type="NCBIfam" id="NF004360">
    <property type="entry name" value="PRK05738.1-5"/>
    <property type="match status" value="1"/>
</dbReference>
<dbReference type="NCBIfam" id="NF004363">
    <property type="entry name" value="PRK05738.2-4"/>
    <property type="match status" value="1"/>
</dbReference>
<dbReference type="PANTHER" id="PTHR11620">
    <property type="entry name" value="60S RIBOSOMAL PROTEIN L23A"/>
    <property type="match status" value="1"/>
</dbReference>
<dbReference type="Pfam" id="PF00276">
    <property type="entry name" value="Ribosomal_L23"/>
    <property type="match status" value="1"/>
</dbReference>
<dbReference type="SUPFAM" id="SSF54189">
    <property type="entry name" value="Ribosomal proteins S24e, L23 and L15e"/>
    <property type="match status" value="1"/>
</dbReference>
<protein>
    <recommendedName>
        <fullName evidence="1">Large ribosomal subunit protein uL23</fullName>
    </recommendedName>
    <alternativeName>
        <fullName evidence="2">50S ribosomal protein L23</fullName>
    </alternativeName>
</protein>
<feature type="chain" id="PRO_0000272704" description="Large ribosomal subunit protein uL23">
    <location>
        <begin position="1"/>
        <end position="97"/>
    </location>
</feature>